<sequence length="443" mass="50204">MDSLAALYKNHIVTLQERTRDVLTRFKLDALLIHSGELLNVFLDDHAYPFKVNPQFKAWVPVTQVPNCWLLVDGVNKPKLWFYLPVDYWHNVEPLPTTFWTEEVDVIALPKADGIGSQLPAARGNIAYIGPVPERALGLDIPADKINPKGVIDYLHYYRAYKTDYELSCMREAQKTAVNGHQAAHEAFLSGMSEFDINQAYLTATGHRDTDVPYGNIVALNEHASVLHYTKLDHRAPSEIRSFLLDAGAEYNGYAADLTRTWAANSDTDFAHLIKDVNDEQLALISTMKAGTSYVDYHIQFHQRIAKLLRKHQIVTDMSEEAMVENDLTGPFMPHGIGHPLGLQVHDVAGFMQDDTGTHLAAPSKYPYLRCTRVLEPRMVLTIEPGIYFIDSLLNPWREGQFSKHFNWQKIDALKPFGGIRIEDNVVVHENNIENMTRDQKLA</sequence>
<organism>
    <name type="scientific">Enterobacter sp. (strain 638)</name>
    <dbReference type="NCBI Taxonomy" id="399742"/>
    <lineage>
        <taxon>Bacteria</taxon>
        <taxon>Pseudomonadati</taxon>
        <taxon>Pseudomonadota</taxon>
        <taxon>Gammaproteobacteria</taxon>
        <taxon>Enterobacterales</taxon>
        <taxon>Enterobacteriaceae</taxon>
        <taxon>Enterobacter</taxon>
    </lineage>
</organism>
<reference key="1">
    <citation type="journal article" date="2010" name="PLoS Genet.">
        <title>Genome sequence of the plant growth promoting endophytic bacterium Enterobacter sp. 638.</title>
        <authorList>
            <person name="Taghavi S."/>
            <person name="van der Lelie D."/>
            <person name="Hoffman A."/>
            <person name="Zhang Y.B."/>
            <person name="Walla M.D."/>
            <person name="Vangronsveld J."/>
            <person name="Newman L."/>
            <person name="Monchy S."/>
        </authorList>
    </citation>
    <scope>NUCLEOTIDE SEQUENCE [LARGE SCALE GENOMIC DNA]</scope>
    <source>
        <strain>638</strain>
    </source>
</reference>
<accession>A4WFX3</accession>
<feature type="chain" id="PRO_1000067402" description="Xaa-Pro dipeptidase">
    <location>
        <begin position="1"/>
        <end position="443"/>
    </location>
</feature>
<feature type="binding site" evidence="1">
    <location>
        <position position="246"/>
    </location>
    <ligand>
        <name>Mn(2+)</name>
        <dbReference type="ChEBI" id="CHEBI:29035"/>
        <label>2</label>
    </ligand>
</feature>
<feature type="binding site" evidence="1">
    <location>
        <position position="257"/>
    </location>
    <ligand>
        <name>Mn(2+)</name>
        <dbReference type="ChEBI" id="CHEBI:29035"/>
        <label>1</label>
    </ligand>
</feature>
<feature type="binding site" evidence="1">
    <location>
        <position position="257"/>
    </location>
    <ligand>
        <name>Mn(2+)</name>
        <dbReference type="ChEBI" id="CHEBI:29035"/>
        <label>2</label>
    </ligand>
</feature>
<feature type="binding site" evidence="1">
    <location>
        <position position="339"/>
    </location>
    <ligand>
        <name>Mn(2+)</name>
        <dbReference type="ChEBI" id="CHEBI:29035"/>
        <label>1</label>
    </ligand>
</feature>
<feature type="binding site" evidence="1">
    <location>
        <position position="384"/>
    </location>
    <ligand>
        <name>Mn(2+)</name>
        <dbReference type="ChEBI" id="CHEBI:29035"/>
        <label>1</label>
    </ligand>
</feature>
<feature type="binding site" evidence="1">
    <location>
        <position position="423"/>
    </location>
    <ligand>
        <name>Mn(2+)</name>
        <dbReference type="ChEBI" id="CHEBI:29035"/>
        <label>1</label>
    </ligand>
</feature>
<feature type="binding site" evidence="1">
    <location>
        <position position="423"/>
    </location>
    <ligand>
        <name>Mn(2+)</name>
        <dbReference type="ChEBI" id="CHEBI:29035"/>
        <label>2</label>
    </ligand>
</feature>
<protein>
    <recommendedName>
        <fullName evidence="1">Xaa-Pro dipeptidase</fullName>
        <shortName evidence="1">X-Pro dipeptidase</shortName>
        <ecNumber evidence="1">3.4.13.9</ecNumber>
    </recommendedName>
    <alternativeName>
        <fullName evidence="1">Imidodipeptidase</fullName>
    </alternativeName>
    <alternativeName>
        <fullName evidence="1">Proline dipeptidase</fullName>
        <shortName evidence="1">Prolidase</shortName>
    </alternativeName>
</protein>
<proteinExistence type="inferred from homology"/>
<dbReference type="EC" id="3.4.13.9" evidence="1"/>
<dbReference type="EMBL" id="CP000653">
    <property type="protein sequence ID" value="ABP62603.1"/>
    <property type="molecule type" value="Genomic_DNA"/>
</dbReference>
<dbReference type="RefSeq" id="WP_015960908.1">
    <property type="nucleotide sequence ID" value="NC_009436.1"/>
</dbReference>
<dbReference type="SMR" id="A4WFX3"/>
<dbReference type="STRING" id="399742.Ent638_3948"/>
<dbReference type="MEROPS" id="M24.003"/>
<dbReference type="KEGG" id="ent:Ent638_3948"/>
<dbReference type="eggNOG" id="COG0006">
    <property type="taxonomic scope" value="Bacteria"/>
</dbReference>
<dbReference type="HOGENOM" id="CLU_050675_0_0_6"/>
<dbReference type="OrthoDB" id="9806388at2"/>
<dbReference type="Proteomes" id="UP000000230">
    <property type="component" value="Chromosome"/>
</dbReference>
<dbReference type="GO" id="GO:0005829">
    <property type="term" value="C:cytosol"/>
    <property type="evidence" value="ECO:0007669"/>
    <property type="project" value="TreeGrafter"/>
</dbReference>
<dbReference type="GO" id="GO:0004177">
    <property type="term" value="F:aminopeptidase activity"/>
    <property type="evidence" value="ECO:0007669"/>
    <property type="project" value="TreeGrafter"/>
</dbReference>
<dbReference type="GO" id="GO:0046872">
    <property type="term" value="F:metal ion binding"/>
    <property type="evidence" value="ECO:0007669"/>
    <property type="project" value="UniProtKB-KW"/>
</dbReference>
<dbReference type="GO" id="GO:0008235">
    <property type="term" value="F:metalloexopeptidase activity"/>
    <property type="evidence" value="ECO:0007669"/>
    <property type="project" value="UniProtKB-UniRule"/>
</dbReference>
<dbReference type="GO" id="GO:0016795">
    <property type="term" value="F:phosphoric triester hydrolase activity"/>
    <property type="evidence" value="ECO:0007669"/>
    <property type="project" value="InterPro"/>
</dbReference>
<dbReference type="GO" id="GO:0102009">
    <property type="term" value="F:proline dipeptidase activity"/>
    <property type="evidence" value="ECO:0007669"/>
    <property type="project" value="UniProtKB-EC"/>
</dbReference>
<dbReference type="GO" id="GO:0006508">
    <property type="term" value="P:proteolysis"/>
    <property type="evidence" value="ECO:0007669"/>
    <property type="project" value="UniProtKB-KW"/>
</dbReference>
<dbReference type="CDD" id="cd01087">
    <property type="entry name" value="Prolidase"/>
    <property type="match status" value="1"/>
</dbReference>
<dbReference type="FunFam" id="3.90.230.10:FF:000006">
    <property type="entry name" value="Xaa-Pro dipeptidase"/>
    <property type="match status" value="1"/>
</dbReference>
<dbReference type="Gene3D" id="3.90.230.10">
    <property type="entry name" value="Creatinase/methionine aminopeptidase superfamily"/>
    <property type="match status" value="1"/>
</dbReference>
<dbReference type="Gene3D" id="3.40.350.10">
    <property type="entry name" value="Creatinase/prolidase N-terminal domain"/>
    <property type="match status" value="1"/>
</dbReference>
<dbReference type="HAMAP" id="MF_01279">
    <property type="entry name" value="X_Pro_dipeptid"/>
    <property type="match status" value="1"/>
</dbReference>
<dbReference type="InterPro" id="IPR029149">
    <property type="entry name" value="Creatin/AminoP/Spt16_N"/>
</dbReference>
<dbReference type="InterPro" id="IPR036005">
    <property type="entry name" value="Creatinase/aminopeptidase-like"/>
</dbReference>
<dbReference type="InterPro" id="IPR048819">
    <property type="entry name" value="PepQ_N"/>
</dbReference>
<dbReference type="InterPro" id="IPR000994">
    <property type="entry name" value="Pept_M24"/>
</dbReference>
<dbReference type="InterPro" id="IPR001131">
    <property type="entry name" value="Peptidase_M24B_aminopep-P_CS"/>
</dbReference>
<dbReference type="InterPro" id="IPR052433">
    <property type="entry name" value="X-Pro_dipept-like"/>
</dbReference>
<dbReference type="InterPro" id="IPR022846">
    <property type="entry name" value="X_Pro_dipept"/>
</dbReference>
<dbReference type="NCBIfam" id="NF010133">
    <property type="entry name" value="PRK13607.1"/>
    <property type="match status" value="1"/>
</dbReference>
<dbReference type="PANTHER" id="PTHR43226">
    <property type="entry name" value="XAA-PRO AMINOPEPTIDASE 3"/>
    <property type="match status" value="1"/>
</dbReference>
<dbReference type="PANTHER" id="PTHR43226:SF8">
    <property type="entry name" value="XAA-PRO DIPEPTIDASE"/>
    <property type="match status" value="1"/>
</dbReference>
<dbReference type="Pfam" id="PF21216">
    <property type="entry name" value="PepQ_N"/>
    <property type="match status" value="1"/>
</dbReference>
<dbReference type="Pfam" id="PF00557">
    <property type="entry name" value="Peptidase_M24"/>
    <property type="match status" value="1"/>
</dbReference>
<dbReference type="SUPFAM" id="SSF55920">
    <property type="entry name" value="Creatinase/aminopeptidase"/>
    <property type="match status" value="1"/>
</dbReference>
<dbReference type="PROSITE" id="PS00491">
    <property type="entry name" value="PROLINE_PEPTIDASE"/>
    <property type="match status" value="1"/>
</dbReference>
<gene>
    <name evidence="1" type="primary">pepQ</name>
    <name type="ordered locus">Ent638_3948</name>
</gene>
<comment type="function">
    <text evidence="1">Splits dipeptides with a prolyl residue in the C-terminal position.</text>
</comment>
<comment type="catalytic activity">
    <reaction evidence="1">
        <text>Xaa-L-Pro dipeptide + H2O = an L-alpha-amino acid + L-proline</text>
        <dbReference type="Rhea" id="RHEA:76407"/>
        <dbReference type="ChEBI" id="CHEBI:15377"/>
        <dbReference type="ChEBI" id="CHEBI:59869"/>
        <dbReference type="ChEBI" id="CHEBI:60039"/>
        <dbReference type="ChEBI" id="CHEBI:195196"/>
        <dbReference type="EC" id="3.4.13.9"/>
    </reaction>
</comment>
<comment type="cofactor">
    <cofactor evidence="1">
        <name>Mn(2+)</name>
        <dbReference type="ChEBI" id="CHEBI:29035"/>
    </cofactor>
    <text evidence="1">Binds 2 manganese ions per subunit.</text>
</comment>
<comment type="similarity">
    <text evidence="1">Belongs to the peptidase M24B family. Bacterial-type prolidase subfamily.</text>
</comment>
<evidence type="ECO:0000255" key="1">
    <source>
        <dbReference type="HAMAP-Rule" id="MF_01279"/>
    </source>
</evidence>
<keyword id="KW-0224">Dipeptidase</keyword>
<keyword id="KW-0378">Hydrolase</keyword>
<keyword id="KW-0464">Manganese</keyword>
<keyword id="KW-0479">Metal-binding</keyword>
<keyword id="KW-0482">Metalloprotease</keyword>
<keyword id="KW-0645">Protease</keyword>
<name>PEPQ_ENT38</name>